<proteinExistence type="inferred from homology"/>
<keyword id="KW-0328">Glycosyltransferase</keyword>
<keyword id="KW-0441">Lipid A biosynthesis</keyword>
<keyword id="KW-0444">Lipid biosynthesis</keyword>
<keyword id="KW-0443">Lipid metabolism</keyword>
<keyword id="KW-0808">Transferase</keyword>
<name>LPXB_PSE14</name>
<reference key="1">
    <citation type="journal article" date="2005" name="J. Bacteriol.">
        <title>Whole-genome sequence analysis of Pseudomonas syringae pv. phaseolicola 1448A reveals divergence among pathovars in genes involved in virulence and transposition.</title>
        <authorList>
            <person name="Joardar V."/>
            <person name="Lindeberg M."/>
            <person name="Jackson R.W."/>
            <person name="Selengut J."/>
            <person name="Dodson R."/>
            <person name="Brinkac L.M."/>
            <person name="Daugherty S.C."/>
            <person name="DeBoy R.T."/>
            <person name="Durkin A.S."/>
            <person name="Gwinn Giglio M."/>
            <person name="Madupu R."/>
            <person name="Nelson W.C."/>
            <person name="Rosovitz M.J."/>
            <person name="Sullivan S.A."/>
            <person name="Crabtree J."/>
            <person name="Creasy T."/>
            <person name="Davidsen T.M."/>
            <person name="Haft D.H."/>
            <person name="Zafar N."/>
            <person name="Zhou L."/>
            <person name="Halpin R."/>
            <person name="Holley T."/>
            <person name="Khouri H.M."/>
            <person name="Feldblyum T.V."/>
            <person name="White O."/>
            <person name="Fraser C.M."/>
            <person name="Chatterjee A.K."/>
            <person name="Cartinhour S."/>
            <person name="Schneider D."/>
            <person name="Mansfield J.W."/>
            <person name="Collmer A."/>
            <person name="Buell R."/>
        </authorList>
    </citation>
    <scope>NUCLEOTIDE SEQUENCE [LARGE SCALE GENOMIC DNA]</scope>
    <source>
        <strain>1448A / Race 6</strain>
    </source>
</reference>
<evidence type="ECO:0000255" key="1">
    <source>
        <dbReference type="HAMAP-Rule" id="MF_00392"/>
    </source>
</evidence>
<comment type="function">
    <text evidence="1">Condensation of UDP-2,3-diacylglucosamine and 2,3-diacylglucosamine-1-phosphate to form lipid A disaccharide, a precursor of lipid A, a phosphorylated glycolipid that anchors the lipopolysaccharide to the outer membrane of the cell.</text>
</comment>
<comment type="catalytic activity">
    <reaction evidence="1">
        <text>a lipid X + a UDP-2-N,3-O-bis[(3R)-3-hydroxyacyl]-alpha-D-glucosamine = a lipid A disaccharide + UDP + H(+)</text>
        <dbReference type="Rhea" id="RHEA:67828"/>
        <dbReference type="ChEBI" id="CHEBI:15378"/>
        <dbReference type="ChEBI" id="CHEBI:58223"/>
        <dbReference type="ChEBI" id="CHEBI:137748"/>
        <dbReference type="ChEBI" id="CHEBI:176338"/>
        <dbReference type="ChEBI" id="CHEBI:176343"/>
        <dbReference type="EC" id="2.4.1.182"/>
    </reaction>
</comment>
<comment type="pathway">
    <text evidence="1">Bacterial outer membrane biogenesis; LPS lipid A biosynthesis.</text>
</comment>
<comment type="similarity">
    <text evidence="1">Belongs to the LpxB family.</text>
</comment>
<protein>
    <recommendedName>
        <fullName evidence="1">Lipid-A-disaccharide synthase</fullName>
        <ecNumber evidence="1">2.4.1.182</ecNumber>
    </recommendedName>
</protein>
<dbReference type="EC" id="2.4.1.182" evidence="1"/>
<dbReference type="EMBL" id="CP000058">
    <property type="protein sequence ID" value="AAZ37276.1"/>
    <property type="molecule type" value="Genomic_DNA"/>
</dbReference>
<dbReference type="RefSeq" id="WP_011169291.1">
    <property type="nucleotide sequence ID" value="NC_005773.3"/>
</dbReference>
<dbReference type="SMR" id="Q48F72"/>
<dbReference type="CAZy" id="GT19">
    <property type="family name" value="Glycosyltransferase Family 19"/>
</dbReference>
<dbReference type="KEGG" id="psp:PSPPH_3827"/>
<dbReference type="eggNOG" id="COG0763">
    <property type="taxonomic scope" value="Bacteria"/>
</dbReference>
<dbReference type="HOGENOM" id="CLU_036577_3_0_6"/>
<dbReference type="UniPathway" id="UPA00973"/>
<dbReference type="Proteomes" id="UP000000551">
    <property type="component" value="Chromosome"/>
</dbReference>
<dbReference type="GO" id="GO:0016020">
    <property type="term" value="C:membrane"/>
    <property type="evidence" value="ECO:0007669"/>
    <property type="project" value="GOC"/>
</dbReference>
<dbReference type="GO" id="GO:0008915">
    <property type="term" value="F:lipid-A-disaccharide synthase activity"/>
    <property type="evidence" value="ECO:0007669"/>
    <property type="project" value="UniProtKB-UniRule"/>
</dbReference>
<dbReference type="GO" id="GO:0005543">
    <property type="term" value="F:phospholipid binding"/>
    <property type="evidence" value="ECO:0007669"/>
    <property type="project" value="TreeGrafter"/>
</dbReference>
<dbReference type="GO" id="GO:0009245">
    <property type="term" value="P:lipid A biosynthetic process"/>
    <property type="evidence" value="ECO:0007669"/>
    <property type="project" value="UniProtKB-UniRule"/>
</dbReference>
<dbReference type="Gene3D" id="3.40.50.2000">
    <property type="entry name" value="Glycogen Phosphorylase B"/>
    <property type="match status" value="1"/>
</dbReference>
<dbReference type="HAMAP" id="MF_00392">
    <property type="entry name" value="LpxB"/>
    <property type="match status" value="1"/>
</dbReference>
<dbReference type="InterPro" id="IPR003835">
    <property type="entry name" value="Glyco_trans_19"/>
</dbReference>
<dbReference type="NCBIfam" id="TIGR00215">
    <property type="entry name" value="lpxB"/>
    <property type="match status" value="1"/>
</dbReference>
<dbReference type="PANTHER" id="PTHR30372">
    <property type="entry name" value="LIPID-A-DISACCHARIDE SYNTHASE"/>
    <property type="match status" value="1"/>
</dbReference>
<dbReference type="PANTHER" id="PTHR30372:SF4">
    <property type="entry name" value="LIPID-A-DISACCHARIDE SYNTHASE, MITOCHONDRIAL-RELATED"/>
    <property type="match status" value="1"/>
</dbReference>
<dbReference type="Pfam" id="PF02684">
    <property type="entry name" value="LpxB"/>
    <property type="match status" value="1"/>
</dbReference>
<dbReference type="SUPFAM" id="SSF53756">
    <property type="entry name" value="UDP-Glycosyltransferase/glycogen phosphorylase"/>
    <property type="match status" value="1"/>
</dbReference>
<sequence>MTKPLCIALVAGEASGDILGSGLMRALKVRHPDIRFIGVGGPLMEAEGMQSYFPMERLSVMGLVEVLGRLRELLARRKLLVQTLINEKPDVFIGIDAPDFTLNIELQLRRAGIKTVHYVSPSVWAWRQKRVLKIREGCDLMLTLLPFEARFYEEKGVPVRFVGHPLADTIPLESYRAAARAGLGLAQEAPVVALMPGSRGGEVGRLGGLFFDAAELLLAQRPGLRFVLPCASPQRRAQVEQLLQGRNLPVTLLDGQSHVALAACDAVLIASGTATLEALLYKRPMVVAYRLAPLTFWILKRMVKSPYVSLPNLLAQRLLVPELLQDDATPEALARTLLPLIDDGQAQTAGFDAIHRILRRDASNQAADAVLSLLGQSSSQ</sequence>
<feature type="chain" id="PRO_0000255209" description="Lipid-A-disaccharide synthase">
    <location>
        <begin position="1"/>
        <end position="380"/>
    </location>
</feature>
<gene>
    <name evidence="1" type="primary">lpxB</name>
    <name type="ordered locus">PSPPH_3827</name>
</gene>
<organism>
    <name type="scientific">Pseudomonas savastanoi pv. phaseolicola (strain 1448A / Race 6)</name>
    <name type="common">Pseudomonas syringae pv. phaseolicola (strain 1448A / Race 6)</name>
    <dbReference type="NCBI Taxonomy" id="264730"/>
    <lineage>
        <taxon>Bacteria</taxon>
        <taxon>Pseudomonadati</taxon>
        <taxon>Pseudomonadota</taxon>
        <taxon>Gammaproteobacteria</taxon>
        <taxon>Pseudomonadales</taxon>
        <taxon>Pseudomonadaceae</taxon>
        <taxon>Pseudomonas</taxon>
    </lineage>
</organism>
<accession>Q48F72</accession>